<dbReference type="EC" id="6.3.5.2" evidence="1"/>
<dbReference type="EMBL" id="CP000477">
    <property type="protein sequence ID" value="ABK13965.1"/>
    <property type="molecule type" value="Genomic_DNA"/>
</dbReference>
<dbReference type="RefSeq" id="WP_011695364.1">
    <property type="nucleotide sequence ID" value="NC_008553.1"/>
</dbReference>
<dbReference type="SMR" id="A0B5J1"/>
<dbReference type="STRING" id="349307.Mthe_0166"/>
<dbReference type="MEROPS" id="C26.A31"/>
<dbReference type="GeneID" id="4462148"/>
<dbReference type="KEGG" id="mtp:Mthe_0166"/>
<dbReference type="HOGENOM" id="CLU_014340_1_4_2"/>
<dbReference type="OrthoDB" id="10772at2157"/>
<dbReference type="UniPathway" id="UPA00189">
    <property type="reaction ID" value="UER00296"/>
</dbReference>
<dbReference type="Proteomes" id="UP000000674">
    <property type="component" value="Chromosome"/>
</dbReference>
<dbReference type="GO" id="GO:0005829">
    <property type="term" value="C:cytosol"/>
    <property type="evidence" value="ECO:0007669"/>
    <property type="project" value="TreeGrafter"/>
</dbReference>
<dbReference type="GO" id="GO:0005524">
    <property type="term" value="F:ATP binding"/>
    <property type="evidence" value="ECO:0007669"/>
    <property type="project" value="UniProtKB-KW"/>
</dbReference>
<dbReference type="GO" id="GO:0003921">
    <property type="term" value="F:GMP synthase activity"/>
    <property type="evidence" value="ECO:0007669"/>
    <property type="project" value="TreeGrafter"/>
</dbReference>
<dbReference type="CDD" id="cd01742">
    <property type="entry name" value="GATase1_GMP_Synthase"/>
    <property type="match status" value="1"/>
</dbReference>
<dbReference type="FunFam" id="3.40.50.880:FF:000047">
    <property type="entry name" value="GMP synthase [glutamine-hydrolyzing] subunit A"/>
    <property type="match status" value="1"/>
</dbReference>
<dbReference type="Gene3D" id="3.40.50.880">
    <property type="match status" value="1"/>
</dbReference>
<dbReference type="HAMAP" id="MF_01510">
    <property type="entry name" value="GMP_synthase_A"/>
    <property type="match status" value="1"/>
</dbReference>
<dbReference type="InterPro" id="IPR029062">
    <property type="entry name" value="Class_I_gatase-like"/>
</dbReference>
<dbReference type="InterPro" id="IPR017926">
    <property type="entry name" value="GATASE"/>
</dbReference>
<dbReference type="InterPro" id="IPR004739">
    <property type="entry name" value="GMP_synth_GATase"/>
</dbReference>
<dbReference type="InterPro" id="IPR023686">
    <property type="entry name" value="GMP_synthase_A"/>
</dbReference>
<dbReference type="NCBIfam" id="TIGR00888">
    <property type="entry name" value="guaA_Nterm"/>
    <property type="match status" value="1"/>
</dbReference>
<dbReference type="NCBIfam" id="NF001975">
    <property type="entry name" value="PRK00758.1"/>
    <property type="match status" value="1"/>
</dbReference>
<dbReference type="PANTHER" id="PTHR11922:SF2">
    <property type="entry name" value="GMP SYNTHASE [GLUTAMINE-HYDROLYZING]"/>
    <property type="match status" value="1"/>
</dbReference>
<dbReference type="PANTHER" id="PTHR11922">
    <property type="entry name" value="GMP SYNTHASE-RELATED"/>
    <property type="match status" value="1"/>
</dbReference>
<dbReference type="Pfam" id="PF00117">
    <property type="entry name" value="GATase"/>
    <property type="match status" value="1"/>
</dbReference>
<dbReference type="PRINTS" id="PR00097">
    <property type="entry name" value="ANTSNTHASEII"/>
</dbReference>
<dbReference type="PRINTS" id="PR00096">
    <property type="entry name" value="GATASE"/>
</dbReference>
<dbReference type="SUPFAM" id="SSF52317">
    <property type="entry name" value="Class I glutamine amidotransferase-like"/>
    <property type="match status" value="1"/>
</dbReference>
<dbReference type="PROSITE" id="PS51273">
    <property type="entry name" value="GATASE_TYPE_1"/>
    <property type="match status" value="1"/>
</dbReference>
<organism>
    <name type="scientific">Methanothrix thermoacetophila (strain DSM 6194 / JCM 14653 / NBRC 101360 / PT)</name>
    <name type="common">Methanosaeta thermophila</name>
    <dbReference type="NCBI Taxonomy" id="349307"/>
    <lineage>
        <taxon>Archaea</taxon>
        <taxon>Methanobacteriati</taxon>
        <taxon>Methanobacteriota</taxon>
        <taxon>Stenosarchaea group</taxon>
        <taxon>Methanomicrobia</taxon>
        <taxon>Methanotrichales</taxon>
        <taxon>Methanotrichaceae</taxon>
        <taxon>Methanothrix</taxon>
    </lineage>
</organism>
<name>GUAAA_METTP</name>
<reference key="1">
    <citation type="submission" date="2006-10" db="EMBL/GenBank/DDBJ databases">
        <title>Complete sequence of Methanosaeta thermophila PT.</title>
        <authorList>
            <consortium name="US DOE Joint Genome Institute"/>
            <person name="Copeland A."/>
            <person name="Lucas S."/>
            <person name="Lapidus A."/>
            <person name="Barry K."/>
            <person name="Detter J.C."/>
            <person name="Glavina del Rio T."/>
            <person name="Hammon N."/>
            <person name="Israni S."/>
            <person name="Pitluck S."/>
            <person name="Chain P."/>
            <person name="Malfatti S."/>
            <person name="Shin M."/>
            <person name="Vergez L."/>
            <person name="Schmutz J."/>
            <person name="Larimer F."/>
            <person name="Land M."/>
            <person name="Hauser L."/>
            <person name="Kyrpides N."/>
            <person name="Kim E."/>
            <person name="Smith K.S."/>
            <person name="Ingram-Smith C."/>
            <person name="Richardson P."/>
        </authorList>
    </citation>
    <scope>NUCLEOTIDE SEQUENCE [LARGE SCALE GENOMIC DNA]</scope>
    <source>
        <strain>DSM 6194 / JCM 14653 / NBRC 101360 / PT</strain>
    </source>
</reference>
<keyword id="KW-0067">ATP-binding</keyword>
<keyword id="KW-0315">Glutamine amidotransferase</keyword>
<keyword id="KW-0332">GMP biosynthesis</keyword>
<keyword id="KW-0436">Ligase</keyword>
<keyword id="KW-0547">Nucleotide-binding</keyword>
<keyword id="KW-0658">Purine biosynthesis</keyword>
<keyword id="KW-1185">Reference proteome</keyword>
<feature type="chain" id="PRO_0000292195" description="GMP synthase [glutamine-hydrolyzing] subunit A">
    <location>
        <begin position="1"/>
        <end position="181"/>
    </location>
</feature>
<feature type="domain" description="Glutamine amidotransferase type-1" evidence="1">
    <location>
        <begin position="2"/>
        <end position="181"/>
    </location>
</feature>
<feature type="active site" description="Nucleophile" evidence="1">
    <location>
        <position position="72"/>
    </location>
</feature>
<feature type="active site" evidence="1">
    <location>
        <position position="159"/>
    </location>
</feature>
<feature type="active site" evidence="1">
    <location>
        <position position="161"/>
    </location>
</feature>
<evidence type="ECO:0000255" key="1">
    <source>
        <dbReference type="HAMAP-Rule" id="MF_01510"/>
    </source>
</evidence>
<proteinExistence type="inferred from homology"/>
<protein>
    <recommendedName>
        <fullName evidence="1">GMP synthase [glutamine-hydrolyzing] subunit A</fullName>
        <ecNumber evidence="1">6.3.5.2</ecNumber>
    </recommendedName>
    <alternativeName>
        <fullName evidence="1">Glutamine amidotransferase</fullName>
    </alternativeName>
</protein>
<gene>
    <name evidence="1" type="primary">guaAA</name>
    <name type="ordered locus">Mthe_0166</name>
</gene>
<sequence length="181" mass="20218">MKILVVNNYGQFNHLIYRSIKDRVEARMISNETPVEDIVADGLILGGGPSMDRSGRCSEYLRTLDIPVLGICLGLQIMAVTFGGKVEPGKVGGYASVEIEVLEEDGILRGVPHRFMAWASHADQVTICPPEFRVIARSSICDIEAICHESRPLYGVQWHPEVAHTEYGEEVFDNFLEICRR</sequence>
<comment type="function">
    <text evidence="1">Catalyzes the synthesis of GMP from XMP.</text>
</comment>
<comment type="catalytic activity">
    <reaction evidence="1">
        <text>XMP + L-glutamine + ATP + H2O = GMP + L-glutamate + AMP + diphosphate + 2 H(+)</text>
        <dbReference type="Rhea" id="RHEA:11680"/>
        <dbReference type="ChEBI" id="CHEBI:15377"/>
        <dbReference type="ChEBI" id="CHEBI:15378"/>
        <dbReference type="ChEBI" id="CHEBI:29985"/>
        <dbReference type="ChEBI" id="CHEBI:30616"/>
        <dbReference type="ChEBI" id="CHEBI:33019"/>
        <dbReference type="ChEBI" id="CHEBI:57464"/>
        <dbReference type="ChEBI" id="CHEBI:58115"/>
        <dbReference type="ChEBI" id="CHEBI:58359"/>
        <dbReference type="ChEBI" id="CHEBI:456215"/>
        <dbReference type="EC" id="6.3.5.2"/>
    </reaction>
</comment>
<comment type="pathway">
    <text evidence="1">Purine metabolism; GMP biosynthesis; GMP from XMP (L-Gln route): step 1/1.</text>
</comment>
<comment type="subunit">
    <text evidence="1">Heterodimer composed of a glutamine amidotransferase subunit (A) and a GMP-binding subunit (B).</text>
</comment>
<accession>A0B5J1</accession>